<accession>A3LQF9</accession>
<evidence type="ECO:0000250" key="1">
    <source>
        <dbReference type="UniProtKB" id="P38820"/>
    </source>
</evidence>
<evidence type="ECO:0000255" key="2">
    <source>
        <dbReference type="HAMAP-Rule" id="MF_03049"/>
    </source>
</evidence>
<feature type="chain" id="PRO_0000369232" description="Adenylyltransferase and sulfurtransferase UBA4">
    <location>
        <begin position="1"/>
        <end position="443"/>
    </location>
</feature>
<feature type="domain" description="Rhodanese" evidence="2">
    <location>
        <begin position="343"/>
        <end position="441"/>
    </location>
</feature>
<feature type="active site" description="Glycyl thioester intermediate; for adenylyltransferase activity" evidence="2">
    <location>
        <position position="231"/>
    </location>
</feature>
<feature type="active site" description="Cysteine persulfide intermediate; for sulfurtransferase activity" evidence="2">
    <location>
        <position position="400"/>
    </location>
</feature>
<feature type="binding site" evidence="2">
    <location>
        <position position="83"/>
    </location>
    <ligand>
        <name>ATP</name>
        <dbReference type="ChEBI" id="CHEBI:30616"/>
    </ligand>
</feature>
<feature type="binding site" evidence="2">
    <location>
        <position position="104"/>
    </location>
    <ligand>
        <name>ATP</name>
        <dbReference type="ChEBI" id="CHEBI:30616"/>
    </ligand>
</feature>
<feature type="binding site" evidence="2">
    <location>
        <begin position="111"/>
        <end position="115"/>
    </location>
    <ligand>
        <name>ATP</name>
        <dbReference type="ChEBI" id="CHEBI:30616"/>
    </ligand>
</feature>
<feature type="binding site" evidence="2">
    <location>
        <position position="128"/>
    </location>
    <ligand>
        <name>ATP</name>
        <dbReference type="ChEBI" id="CHEBI:30616"/>
    </ligand>
</feature>
<feature type="binding site" evidence="2">
    <location>
        <begin position="172"/>
        <end position="173"/>
    </location>
    <ligand>
        <name>ATP</name>
        <dbReference type="ChEBI" id="CHEBI:30616"/>
    </ligand>
</feature>
<feature type="binding site" evidence="2">
    <location>
        <position position="214"/>
    </location>
    <ligand>
        <name>Zn(2+)</name>
        <dbReference type="ChEBI" id="CHEBI:29105"/>
    </ligand>
</feature>
<feature type="binding site" evidence="2">
    <location>
        <position position="217"/>
    </location>
    <ligand>
        <name>Zn(2+)</name>
        <dbReference type="ChEBI" id="CHEBI:29105"/>
    </ligand>
</feature>
<feature type="binding site" evidence="2">
    <location>
        <position position="292"/>
    </location>
    <ligand>
        <name>Zn(2+)</name>
        <dbReference type="ChEBI" id="CHEBI:29105"/>
    </ligand>
</feature>
<feature type="binding site" evidence="2">
    <location>
        <position position="295"/>
    </location>
    <ligand>
        <name>Zn(2+)</name>
        <dbReference type="ChEBI" id="CHEBI:29105"/>
    </ligand>
</feature>
<protein>
    <recommendedName>
        <fullName evidence="2">Adenylyltransferase and sulfurtransferase UBA4</fullName>
    </recommendedName>
    <alternativeName>
        <fullName evidence="2">Ubiquitin-like protein activator 4</fullName>
    </alternativeName>
    <domain>
        <recommendedName>
            <fullName evidence="2">Adenylyltransferase UBA4</fullName>
            <ecNumber evidence="2">2.7.7.-</ecNumber>
        </recommendedName>
    </domain>
    <domain>
        <recommendedName>
            <fullName evidence="2">Sulfurtransferase UBA4</fullName>
            <ecNumber evidence="2">2.8.1.-</ecNumber>
        </recommendedName>
    </domain>
</protein>
<gene>
    <name evidence="2" type="primary">UBA4</name>
    <name type="ORF">PICST_81395</name>
</gene>
<proteinExistence type="inferred from homology"/>
<sequence>MAETNSREEELLRRIQELELENEVLKKKVAEVEYDAKYPKIDENFCLDEYKRYGRQMIVPEFGSLKSQIKLKNSSILVVGAGGLGCPALLYLSAAGIGKIGIVDDDIVDISNLHRQVLHTTDSIGMFKCDSAKKYICKLNPHVIVKTYPVRLHNDNAFDIVNDYDIVLDCTDTPAIRYLINDVSVLCRKTIVSGSGLKSDGQLSILNFNNEGPCYRCFYPKPPSAESITTCSDGGVIGPCIGLLGVSMAVETIKVLTGFYTKDNFKPFLSMYTGYPQQSFRVFKMRGRSDKCSVCGSFPTVSKEAILNNEIDYVAFCGKVDSNVLTPEDRITVQQFSDIVTRQSKAPVLLDVRTKEQFQIAKLPNSINIEWDPTFKKLESLDKYLPEDFDKDTDPVFVVCRYGNDSQLATRKMKQELDFKNAKDIIGGLNKWSDIVNPKFPKY</sequence>
<keyword id="KW-0067">ATP-binding</keyword>
<keyword id="KW-0963">Cytoplasm</keyword>
<keyword id="KW-0479">Metal-binding</keyword>
<keyword id="KW-0511">Multifunctional enzyme</keyword>
<keyword id="KW-0547">Nucleotide-binding</keyword>
<keyword id="KW-0548">Nucleotidyltransferase</keyword>
<keyword id="KW-1185">Reference proteome</keyword>
<keyword id="KW-0808">Transferase</keyword>
<keyword id="KW-0819">tRNA processing</keyword>
<keyword id="KW-0833">Ubl conjugation pathway</keyword>
<keyword id="KW-0862">Zinc</keyword>
<dbReference type="EC" id="2.7.7.-" evidence="2"/>
<dbReference type="EC" id="2.8.1.-" evidence="2"/>
<dbReference type="EMBL" id="CP000496">
    <property type="protein sequence ID" value="ABN65201.2"/>
    <property type="molecule type" value="Genomic_DNA"/>
</dbReference>
<dbReference type="RefSeq" id="XP_001383230.2">
    <property type="nucleotide sequence ID" value="XM_001383193.1"/>
</dbReference>
<dbReference type="SMR" id="A3LQF9"/>
<dbReference type="FunCoup" id="A3LQF9">
    <property type="interactions" value="866"/>
</dbReference>
<dbReference type="STRING" id="322104.A3LQF9"/>
<dbReference type="GeneID" id="4837270"/>
<dbReference type="KEGG" id="pic:PICST_81395"/>
<dbReference type="eggNOG" id="KOG2017">
    <property type="taxonomic scope" value="Eukaryota"/>
</dbReference>
<dbReference type="HOGENOM" id="CLU_013325_1_2_1"/>
<dbReference type="InParanoid" id="A3LQF9"/>
<dbReference type="OMA" id="IPDVGMD"/>
<dbReference type="OrthoDB" id="10261062at2759"/>
<dbReference type="UniPathway" id="UPA00988"/>
<dbReference type="Proteomes" id="UP000002258">
    <property type="component" value="Chromosome 2"/>
</dbReference>
<dbReference type="GO" id="GO:0005829">
    <property type="term" value="C:cytosol"/>
    <property type="evidence" value="ECO:0007669"/>
    <property type="project" value="InterPro"/>
</dbReference>
<dbReference type="GO" id="GO:0070566">
    <property type="term" value="F:adenylyltransferase activity"/>
    <property type="evidence" value="ECO:0007669"/>
    <property type="project" value="InterPro"/>
</dbReference>
<dbReference type="GO" id="GO:0005524">
    <property type="term" value="F:ATP binding"/>
    <property type="evidence" value="ECO:0007669"/>
    <property type="project" value="UniProtKB-KW"/>
</dbReference>
<dbReference type="GO" id="GO:0046872">
    <property type="term" value="F:metal ion binding"/>
    <property type="evidence" value="ECO:0007669"/>
    <property type="project" value="UniProtKB-KW"/>
</dbReference>
<dbReference type="GO" id="GO:0004792">
    <property type="term" value="F:thiosulfate-cyanide sulfurtransferase activity"/>
    <property type="evidence" value="ECO:0007669"/>
    <property type="project" value="TreeGrafter"/>
</dbReference>
<dbReference type="GO" id="GO:0042292">
    <property type="term" value="F:URM1 activating enzyme activity"/>
    <property type="evidence" value="ECO:0007669"/>
    <property type="project" value="TreeGrafter"/>
</dbReference>
<dbReference type="GO" id="GO:0032447">
    <property type="term" value="P:protein urmylation"/>
    <property type="evidence" value="ECO:0007669"/>
    <property type="project" value="UniProtKB-UniRule"/>
</dbReference>
<dbReference type="GO" id="GO:0002143">
    <property type="term" value="P:tRNA wobble position uridine thiolation"/>
    <property type="evidence" value="ECO:0007669"/>
    <property type="project" value="InterPro"/>
</dbReference>
<dbReference type="CDD" id="cd00757">
    <property type="entry name" value="ThiF_MoeB_HesA_family"/>
    <property type="match status" value="1"/>
</dbReference>
<dbReference type="FunFam" id="3.40.250.10:FF:000014">
    <property type="entry name" value="Adenylyltransferase and sulfurtransferase MOCS3"/>
    <property type="match status" value="1"/>
</dbReference>
<dbReference type="FunFam" id="3.40.50.720:FF:000033">
    <property type="entry name" value="Adenylyltransferase and sulfurtransferase MOCS3"/>
    <property type="match status" value="1"/>
</dbReference>
<dbReference type="Gene3D" id="3.40.50.720">
    <property type="entry name" value="NAD(P)-binding Rossmann-like Domain"/>
    <property type="match status" value="1"/>
</dbReference>
<dbReference type="Gene3D" id="3.40.250.10">
    <property type="entry name" value="Rhodanese-like domain"/>
    <property type="match status" value="1"/>
</dbReference>
<dbReference type="HAMAP" id="MF_03049">
    <property type="entry name" value="MOCS3_Uba4"/>
    <property type="match status" value="1"/>
</dbReference>
<dbReference type="InterPro" id="IPR028885">
    <property type="entry name" value="MOCS3/Uba4"/>
</dbReference>
<dbReference type="InterPro" id="IPR001763">
    <property type="entry name" value="Rhodanese-like_dom"/>
</dbReference>
<dbReference type="InterPro" id="IPR036873">
    <property type="entry name" value="Rhodanese-like_dom_sf"/>
</dbReference>
<dbReference type="InterPro" id="IPR045886">
    <property type="entry name" value="ThiF/MoeB/HesA"/>
</dbReference>
<dbReference type="InterPro" id="IPR000594">
    <property type="entry name" value="ThiF_NAD_FAD-bd"/>
</dbReference>
<dbReference type="InterPro" id="IPR035985">
    <property type="entry name" value="Ubiquitin-activating_enz"/>
</dbReference>
<dbReference type="PANTHER" id="PTHR10953:SF102">
    <property type="entry name" value="ADENYLYLTRANSFERASE AND SULFURTRANSFERASE MOCS3"/>
    <property type="match status" value="1"/>
</dbReference>
<dbReference type="PANTHER" id="PTHR10953">
    <property type="entry name" value="UBIQUITIN-ACTIVATING ENZYME E1"/>
    <property type="match status" value="1"/>
</dbReference>
<dbReference type="Pfam" id="PF00581">
    <property type="entry name" value="Rhodanese"/>
    <property type="match status" value="1"/>
</dbReference>
<dbReference type="Pfam" id="PF00899">
    <property type="entry name" value="ThiF"/>
    <property type="match status" value="1"/>
</dbReference>
<dbReference type="SMART" id="SM00450">
    <property type="entry name" value="RHOD"/>
    <property type="match status" value="1"/>
</dbReference>
<dbReference type="SUPFAM" id="SSF69572">
    <property type="entry name" value="Activating enzymes of the ubiquitin-like proteins"/>
    <property type="match status" value="1"/>
</dbReference>
<dbReference type="PROSITE" id="PS50206">
    <property type="entry name" value="RHODANESE_3"/>
    <property type="match status" value="1"/>
</dbReference>
<reference key="1">
    <citation type="journal article" date="2007" name="Nat. Biotechnol.">
        <title>Genome sequence of the lignocellulose-bioconverting and xylose-fermenting yeast Pichia stipitis.</title>
        <authorList>
            <person name="Jeffries T.W."/>
            <person name="Grigoriev I.V."/>
            <person name="Grimwood J."/>
            <person name="Laplaza J.M."/>
            <person name="Aerts A."/>
            <person name="Salamov A."/>
            <person name="Schmutz J."/>
            <person name="Lindquist E."/>
            <person name="Dehal P."/>
            <person name="Shapiro H."/>
            <person name="Jin Y.-S."/>
            <person name="Passoth V."/>
            <person name="Richardson P.M."/>
        </authorList>
    </citation>
    <scope>NUCLEOTIDE SEQUENCE [LARGE SCALE GENOMIC DNA]</scope>
    <source>
        <strain>ATCC 58785 / CBS 6054 / NBRC 10063 / NRRL Y-11545</strain>
    </source>
</reference>
<comment type="function">
    <text evidence="2">Plays a central role in 2-thiolation of mcm(5)S(2)U at tRNA wobble positions of cytosolic tRNA(Lys), tRNA(Glu) and tRNA(Gln). Acts by mediating the C-terminal thiocarboxylation of sulfur carrier URM1. Its N-terminus first activates URM1 as acyl-adenylate (-COAMP), then the persulfide sulfur on the catalytic cysteine is transferred to URM1 to form thiocarboxylation (-COSH) of its C-terminus. The reaction probably involves hydrogen sulfide that is generated from the persulfide intermediate and that acts as a nucleophile towards URM1. Subsequently, a transient disulfide bond is formed. Does not use thiosulfate as sulfur donor; NFS1 probably acting as a sulfur donor for thiocarboxylation reactions. Prior mcm(5) tRNA modification by the elongator complex is required for 2-thiolation. May also be involved in protein urmylation.</text>
</comment>
<comment type="cofactor">
    <cofactor evidence="2">
        <name>Zn(2+)</name>
        <dbReference type="ChEBI" id="CHEBI:29105"/>
    </cofactor>
    <text evidence="2">Binds 1 zinc ion per subunit.</text>
</comment>
<comment type="pathway">
    <text evidence="2">tRNA modification; 5-methoxycarbonylmethyl-2-thiouridine-tRNA biosynthesis.</text>
</comment>
<comment type="subcellular location">
    <subcellularLocation>
        <location evidence="1">Cytoplasm</location>
        <location evidence="1">Cytosol</location>
    </subcellularLocation>
</comment>
<comment type="similarity">
    <text evidence="2">In the N-terminal section; belongs to the HesA/MoeB/ThiF family. UBA4 subfamily.</text>
</comment>
<name>UBA4_PICST</name>
<organism>
    <name type="scientific">Scheffersomyces stipitis (strain ATCC 58785 / CBS 6054 / NBRC 10063 / NRRL Y-11545)</name>
    <name type="common">Yeast</name>
    <name type="synonym">Pichia stipitis</name>
    <dbReference type="NCBI Taxonomy" id="322104"/>
    <lineage>
        <taxon>Eukaryota</taxon>
        <taxon>Fungi</taxon>
        <taxon>Dikarya</taxon>
        <taxon>Ascomycota</taxon>
        <taxon>Saccharomycotina</taxon>
        <taxon>Pichiomycetes</taxon>
        <taxon>Debaryomycetaceae</taxon>
        <taxon>Scheffersomyces</taxon>
    </lineage>
</organism>